<name>NDHK_ACOCL</name>
<accession>Q3V530</accession>
<gene>
    <name evidence="1" type="primary">ndhK</name>
</gene>
<protein>
    <recommendedName>
        <fullName evidence="1">NAD(P)H-quinone oxidoreductase subunit K, chloroplastic</fullName>
        <ecNumber evidence="1">7.1.1.-</ecNumber>
    </recommendedName>
    <alternativeName>
        <fullName evidence="1">NAD(P)H dehydrogenase subunit K</fullName>
    </alternativeName>
    <alternativeName>
        <fullName evidence="1">NADH-plastoquinone oxidoreductase subunit K</fullName>
    </alternativeName>
</protein>
<geneLocation type="chloroplast"/>
<comment type="function">
    <text evidence="1">NDH shuttles electrons from NAD(P)H:plastoquinone, via FMN and iron-sulfur (Fe-S) centers, to quinones in the photosynthetic chain and possibly in a chloroplast respiratory chain. The immediate electron acceptor for the enzyme in this species is believed to be plastoquinone. Couples the redox reaction to proton translocation, and thus conserves the redox energy in a proton gradient.</text>
</comment>
<comment type="catalytic activity">
    <reaction evidence="1">
        <text>a plastoquinone + NADH + (n+1) H(+)(in) = a plastoquinol + NAD(+) + n H(+)(out)</text>
        <dbReference type="Rhea" id="RHEA:42608"/>
        <dbReference type="Rhea" id="RHEA-COMP:9561"/>
        <dbReference type="Rhea" id="RHEA-COMP:9562"/>
        <dbReference type="ChEBI" id="CHEBI:15378"/>
        <dbReference type="ChEBI" id="CHEBI:17757"/>
        <dbReference type="ChEBI" id="CHEBI:57540"/>
        <dbReference type="ChEBI" id="CHEBI:57945"/>
        <dbReference type="ChEBI" id="CHEBI:62192"/>
    </reaction>
</comment>
<comment type="catalytic activity">
    <reaction evidence="1">
        <text>a plastoquinone + NADPH + (n+1) H(+)(in) = a plastoquinol + NADP(+) + n H(+)(out)</text>
        <dbReference type="Rhea" id="RHEA:42612"/>
        <dbReference type="Rhea" id="RHEA-COMP:9561"/>
        <dbReference type="Rhea" id="RHEA-COMP:9562"/>
        <dbReference type="ChEBI" id="CHEBI:15378"/>
        <dbReference type="ChEBI" id="CHEBI:17757"/>
        <dbReference type="ChEBI" id="CHEBI:57783"/>
        <dbReference type="ChEBI" id="CHEBI:58349"/>
        <dbReference type="ChEBI" id="CHEBI:62192"/>
    </reaction>
</comment>
<comment type="cofactor">
    <cofactor evidence="1">
        <name>[4Fe-4S] cluster</name>
        <dbReference type="ChEBI" id="CHEBI:49883"/>
    </cofactor>
    <text evidence="1">Binds 1 [4Fe-4S] cluster.</text>
</comment>
<comment type="subunit">
    <text evidence="1">NDH is composed of at least 16 different subunits, 5 of which are encoded in the nucleus.</text>
</comment>
<comment type="subcellular location">
    <subcellularLocation>
        <location evidence="1">Plastid</location>
        <location evidence="1">Chloroplast thylakoid membrane</location>
        <topology evidence="1">Peripheral membrane protein</topology>
        <orientation evidence="1">Stromal side</orientation>
    </subcellularLocation>
</comment>
<comment type="similarity">
    <text evidence="1">Belongs to the complex I 20 kDa subunit family.</text>
</comment>
<comment type="sequence caution" evidence="3">
    <conflict type="erroneous initiation">
        <sequence resource="EMBL-CDS" id="CAI53798"/>
    </conflict>
</comment>
<dbReference type="EC" id="7.1.1.-" evidence="1"/>
<dbReference type="EMBL" id="AJ879453">
    <property type="protein sequence ID" value="CAI53798.1"/>
    <property type="status" value="ALT_INIT"/>
    <property type="molecule type" value="Genomic_DNA"/>
</dbReference>
<dbReference type="RefSeq" id="YP_319769.3">
    <property type="nucleotide sequence ID" value="NC_007407.1"/>
</dbReference>
<dbReference type="SMR" id="Q3V530"/>
<dbReference type="GeneID" id="3677488"/>
<dbReference type="GO" id="GO:0009535">
    <property type="term" value="C:chloroplast thylakoid membrane"/>
    <property type="evidence" value="ECO:0007669"/>
    <property type="project" value="UniProtKB-SubCell"/>
</dbReference>
<dbReference type="GO" id="GO:0045271">
    <property type="term" value="C:respiratory chain complex I"/>
    <property type="evidence" value="ECO:0007669"/>
    <property type="project" value="TreeGrafter"/>
</dbReference>
<dbReference type="GO" id="GO:0051539">
    <property type="term" value="F:4 iron, 4 sulfur cluster binding"/>
    <property type="evidence" value="ECO:0007669"/>
    <property type="project" value="UniProtKB-KW"/>
</dbReference>
<dbReference type="GO" id="GO:0005506">
    <property type="term" value="F:iron ion binding"/>
    <property type="evidence" value="ECO:0007669"/>
    <property type="project" value="UniProtKB-UniRule"/>
</dbReference>
<dbReference type="GO" id="GO:0008137">
    <property type="term" value="F:NADH dehydrogenase (ubiquinone) activity"/>
    <property type="evidence" value="ECO:0007669"/>
    <property type="project" value="InterPro"/>
</dbReference>
<dbReference type="GO" id="GO:0048038">
    <property type="term" value="F:quinone binding"/>
    <property type="evidence" value="ECO:0007669"/>
    <property type="project" value="UniProtKB-KW"/>
</dbReference>
<dbReference type="GO" id="GO:0009060">
    <property type="term" value="P:aerobic respiration"/>
    <property type="evidence" value="ECO:0007669"/>
    <property type="project" value="TreeGrafter"/>
</dbReference>
<dbReference type="GO" id="GO:0015990">
    <property type="term" value="P:electron transport coupled proton transport"/>
    <property type="evidence" value="ECO:0007669"/>
    <property type="project" value="TreeGrafter"/>
</dbReference>
<dbReference type="GO" id="GO:0019684">
    <property type="term" value="P:photosynthesis, light reaction"/>
    <property type="evidence" value="ECO:0007669"/>
    <property type="project" value="UniProtKB-UniRule"/>
</dbReference>
<dbReference type="FunFam" id="3.40.50.12280:FF:000003">
    <property type="entry name" value="NAD(P)H-quinone oxidoreductase subunit K, chloroplastic"/>
    <property type="match status" value="1"/>
</dbReference>
<dbReference type="Gene3D" id="3.40.50.12280">
    <property type="match status" value="1"/>
</dbReference>
<dbReference type="HAMAP" id="MF_01356">
    <property type="entry name" value="NDH1_NuoB"/>
    <property type="match status" value="1"/>
</dbReference>
<dbReference type="InterPro" id="IPR006137">
    <property type="entry name" value="NADH_UbQ_OxRdtase-like_20kDa"/>
</dbReference>
<dbReference type="InterPro" id="IPR006138">
    <property type="entry name" value="NADH_UQ_OxRdtase_20Kd_su"/>
</dbReference>
<dbReference type="NCBIfam" id="TIGR01957">
    <property type="entry name" value="nuoB_fam"/>
    <property type="match status" value="1"/>
</dbReference>
<dbReference type="NCBIfam" id="NF005012">
    <property type="entry name" value="PRK06411.1"/>
    <property type="match status" value="1"/>
</dbReference>
<dbReference type="PANTHER" id="PTHR11995">
    <property type="entry name" value="NADH DEHYDROGENASE"/>
    <property type="match status" value="1"/>
</dbReference>
<dbReference type="PANTHER" id="PTHR11995:SF14">
    <property type="entry name" value="NADH DEHYDROGENASE [UBIQUINONE] IRON-SULFUR PROTEIN 7, MITOCHONDRIAL"/>
    <property type="match status" value="1"/>
</dbReference>
<dbReference type="Pfam" id="PF01058">
    <property type="entry name" value="Oxidored_q6"/>
    <property type="match status" value="1"/>
</dbReference>
<dbReference type="SUPFAM" id="SSF56770">
    <property type="entry name" value="HydA/Nqo6-like"/>
    <property type="match status" value="1"/>
</dbReference>
<dbReference type="PROSITE" id="PS01150">
    <property type="entry name" value="COMPLEX1_20K"/>
    <property type="match status" value="1"/>
</dbReference>
<organism>
    <name type="scientific">Acorus calamus</name>
    <name type="common">Sweet flag</name>
    <dbReference type="NCBI Taxonomy" id="4465"/>
    <lineage>
        <taxon>Eukaryota</taxon>
        <taxon>Viridiplantae</taxon>
        <taxon>Streptophyta</taxon>
        <taxon>Embryophyta</taxon>
        <taxon>Tracheophyta</taxon>
        <taxon>Spermatophyta</taxon>
        <taxon>Magnoliopsida</taxon>
        <taxon>Liliopsida</taxon>
        <taxon>Acoraceae</taxon>
        <taxon>Acorus</taxon>
    </lineage>
</organism>
<feature type="chain" id="PRO_0000358514" description="NAD(P)H-quinone oxidoreductase subunit K, chloroplastic">
    <location>
        <begin position="1"/>
        <end position="239"/>
    </location>
</feature>
<feature type="region of interest" description="Disordered" evidence="2">
    <location>
        <begin position="217"/>
        <end position="239"/>
    </location>
</feature>
<feature type="compositionally biased region" description="Basic and acidic residues" evidence="2">
    <location>
        <begin position="225"/>
        <end position="239"/>
    </location>
</feature>
<feature type="binding site" evidence="1">
    <location>
        <position position="43"/>
    </location>
    <ligand>
        <name>[4Fe-4S] cluster</name>
        <dbReference type="ChEBI" id="CHEBI:49883"/>
    </ligand>
</feature>
<feature type="binding site" evidence="1">
    <location>
        <position position="44"/>
    </location>
    <ligand>
        <name>[4Fe-4S] cluster</name>
        <dbReference type="ChEBI" id="CHEBI:49883"/>
    </ligand>
</feature>
<feature type="binding site" evidence="1">
    <location>
        <position position="108"/>
    </location>
    <ligand>
        <name>[4Fe-4S] cluster</name>
        <dbReference type="ChEBI" id="CHEBI:49883"/>
    </ligand>
</feature>
<feature type="binding site" evidence="1">
    <location>
        <position position="139"/>
    </location>
    <ligand>
        <name>[4Fe-4S] cluster</name>
        <dbReference type="ChEBI" id="CHEBI:49883"/>
    </ligand>
</feature>
<reference key="1">
    <citation type="journal article" date="2005" name="Mol. Biol. Evol.">
        <title>Analysis of Acorus calamus chloroplast genome and its phylogenetic implications.</title>
        <authorList>
            <person name="Goremykin V.V."/>
            <person name="Holland B."/>
            <person name="Hirsch-Ernst K.I."/>
            <person name="Hellwig F.H."/>
        </authorList>
    </citation>
    <scope>NUCLEOTIDE SEQUENCE [LARGE SCALE GENOMIC DNA]</scope>
</reference>
<sequence length="239" mass="26809">MNSIEFPLLDRTTPNSVISTTLNDLSNWSRLSSLWPLLYGTSCCFIEFASLIGSRFDFDRYGLVPRSSPRQADLILTAGTVTMKMAPSLVRLYEQMPEPKYVIAMGACTITGGMFSTDSYSTVRGVDKLIPVDVYLPGCPPKPEAVIDAITKLRKKLSREISEDRMGSQRENRCFTTNHKFYVRRSTHTGNYDQGLLYQSPPTAEIPSETEPFFKYKSSVSSRELGNESGKEDVSIQNK</sequence>
<proteinExistence type="inferred from homology"/>
<keyword id="KW-0004">4Fe-4S</keyword>
<keyword id="KW-0150">Chloroplast</keyword>
<keyword id="KW-0408">Iron</keyword>
<keyword id="KW-0411">Iron-sulfur</keyword>
<keyword id="KW-0472">Membrane</keyword>
<keyword id="KW-0479">Metal-binding</keyword>
<keyword id="KW-0520">NAD</keyword>
<keyword id="KW-0521">NADP</keyword>
<keyword id="KW-0934">Plastid</keyword>
<keyword id="KW-0618">Plastoquinone</keyword>
<keyword id="KW-0874">Quinone</keyword>
<keyword id="KW-0793">Thylakoid</keyword>
<keyword id="KW-1278">Translocase</keyword>
<keyword id="KW-0813">Transport</keyword>
<evidence type="ECO:0000255" key="1">
    <source>
        <dbReference type="HAMAP-Rule" id="MF_01356"/>
    </source>
</evidence>
<evidence type="ECO:0000256" key="2">
    <source>
        <dbReference type="SAM" id="MobiDB-lite"/>
    </source>
</evidence>
<evidence type="ECO:0000305" key="3"/>